<dbReference type="EC" id="2.5.1.73" evidence="1"/>
<dbReference type="EMBL" id="AE000666">
    <property type="protein sequence ID" value="AAB85556.1"/>
    <property type="molecule type" value="Genomic_DNA"/>
</dbReference>
<dbReference type="PIR" id="F69008">
    <property type="entry name" value="F69008"/>
</dbReference>
<dbReference type="SMR" id="O27139"/>
<dbReference type="FunCoup" id="O27139">
    <property type="interactions" value="25"/>
</dbReference>
<dbReference type="STRING" id="187420.MTH_1067"/>
<dbReference type="PaxDb" id="187420-MTH_1067"/>
<dbReference type="EnsemblBacteria" id="AAB85556">
    <property type="protein sequence ID" value="AAB85556"/>
    <property type="gene ID" value="MTH_1067"/>
</dbReference>
<dbReference type="KEGG" id="mth:MTH_1067"/>
<dbReference type="PATRIC" id="fig|187420.15.peg.1044"/>
<dbReference type="HOGENOM" id="CLU_060476_0_0_2"/>
<dbReference type="InParanoid" id="O27139"/>
<dbReference type="Proteomes" id="UP000005223">
    <property type="component" value="Chromosome"/>
</dbReference>
<dbReference type="GO" id="GO:0043766">
    <property type="term" value="F:Sep-tRNA:Cys-tRNA synthase activity"/>
    <property type="evidence" value="ECO:0007669"/>
    <property type="project" value="UniProtKB-UniRule"/>
</dbReference>
<dbReference type="GO" id="GO:0006412">
    <property type="term" value="P:translation"/>
    <property type="evidence" value="ECO:0007669"/>
    <property type="project" value="UniProtKB-KW"/>
</dbReference>
<dbReference type="CDD" id="cd06452">
    <property type="entry name" value="SepCysS"/>
    <property type="match status" value="1"/>
</dbReference>
<dbReference type="Gene3D" id="3.90.1150.10">
    <property type="entry name" value="Aspartate Aminotransferase, domain 1"/>
    <property type="match status" value="1"/>
</dbReference>
<dbReference type="Gene3D" id="3.40.640.10">
    <property type="entry name" value="Type I PLP-dependent aspartate aminotransferase-like (Major domain)"/>
    <property type="match status" value="1"/>
</dbReference>
<dbReference type="HAMAP" id="MF_01675">
    <property type="entry name" value="Sep_Cys_tRNA_synth"/>
    <property type="match status" value="1"/>
</dbReference>
<dbReference type="InterPro" id="IPR015424">
    <property type="entry name" value="PyrdxlP-dep_Trfase"/>
</dbReference>
<dbReference type="InterPro" id="IPR015421">
    <property type="entry name" value="PyrdxlP-dep_Trfase_major"/>
</dbReference>
<dbReference type="InterPro" id="IPR015422">
    <property type="entry name" value="PyrdxlP-dep_Trfase_small"/>
</dbReference>
<dbReference type="InterPro" id="IPR013375">
    <property type="entry name" value="Sep_Cys-tRNA_synth_arc"/>
</dbReference>
<dbReference type="InterPro" id="IPR008829">
    <property type="entry name" value="SepSecS/SepCysS"/>
</dbReference>
<dbReference type="NCBIfam" id="NF006810">
    <property type="entry name" value="PRK09331.1"/>
    <property type="match status" value="1"/>
</dbReference>
<dbReference type="NCBIfam" id="TIGR02539">
    <property type="entry name" value="SepCysS"/>
    <property type="match status" value="1"/>
</dbReference>
<dbReference type="PANTHER" id="PTHR43586">
    <property type="entry name" value="CYSTEINE DESULFURASE"/>
    <property type="match status" value="1"/>
</dbReference>
<dbReference type="PANTHER" id="PTHR43586:SF3">
    <property type="entry name" value="O-PHOSPHO-L-SERYL-TRNA:CYS-TRNA SYNTHASE"/>
    <property type="match status" value="1"/>
</dbReference>
<dbReference type="Pfam" id="PF05889">
    <property type="entry name" value="SepSecS"/>
    <property type="match status" value="1"/>
</dbReference>
<dbReference type="SUPFAM" id="SSF53383">
    <property type="entry name" value="PLP-dependent transferases"/>
    <property type="match status" value="1"/>
</dbReference>
<protein>
    <recommendedName>
        <fullName evidence="1">O-phospho-L-seryl-tRNA:Cys-tRNA synthase</fullName>
        <ecNumber evidence="1">2.5.1.73</ecNumber>
    </recommendedName>
    <alternativeName>
        <fullName evidence="1">Sep-tRNA:Cys-tRNA synthase</fullName>
        <shortName evidence="1">SepCysS</shortName>
    </alternativeName>
</protein>
<reference key="1">
    <citation type="journal article" date="1997" name="J. Bacteriol.">
        <title>Complete genome sequence of Methanobacterium thermoautotrophicum deltaH: functional analysis and comparative genomics.</title>
        <authorList>
            <person name="Smith D.R."/>
            <person name="Doucette-Stamm L.A."/>
            <person name="Deloughery C."/>
            <person name="Lee H.-M."/>
            <person name="Dubois J."/>
            <person name="Aldredge T."/>
            <person name="Bashirzadeh R."/>
            <person name="Blakely D."/>
            <person name="Cook R."/>
            <person name="Gilbert K."/>
            <person name="Harrison D."/>
            <person name="Hoang L."/>
            <person name="Keagle P."/>
            <person name="Lumm W."/>
            <person name="Pothier B."/>
            <person name="Qiu D."/>
            <person name="Spadafora R."/>
            <person name="Vicare R."/>
            <person name="Wang Y."/>
            <person name="Wierzbowski J."/>
            <person name="Gibson R."/>
            <person name="Jiwani N."/>
            <person name="Caruso A."/>
            <person name="Bush D."/>
            <person name="Safer H."/>
            <person name="Patwell D."/>
            <person name="Prabhakar S."/>
            <person name="McDougall S."/>
            <person name="Shimer G."/>
            <person name="Goyal A."/>
            <person name="Pietrovski S."/>
            <person name="Church G.M."/>
            <person name="Daniels C.J."/>
            <person name="Mao J.-I."/>
            <person name="Rice P."/>
            <person name="Noelling J."/>
            <person name="Reeve J.N."/>
        </authorList>
    </citation>
    <scope>NUCLEOTIDE SEQUENCE [LARGE SCALE GENOMIC DNA]</scope>
    <source>
        <strain>ATCC 29096 / DSM 1053 / JCM 10044 / NBRC 100330 / Delta H</strain>
    </source>
</reference>
<sequence length="377" mass="42022">MECADYGLTRKLERDNLNLNPLQRGGVLPAAARKALHEFGDGYSVCDYCDGRLDQVTRPAINCFLDDLADFTGSDAVRTVHGAREGKFAVMHALCERGDTVVVDGNAHYTTHLAAERNGLEIVEVPSTGHPSYEVTPEAYREVLEETIDRVEVKLAVLTHVDGNYGNLTDARGVADVCRKLGVPLLLNCAYSMGRLPVNLRELGVDFVVGSGHKSMAASGPIGVLGMKSEWEDTVLRRSGRHEKKELELLGCTSRGAPLATLMASLPYVRERVSRWDGEVKKTRYLVSELEDIGGIEQLGVRPKEHDLVRFETPVFHEIAASHPRKGFFLYEELKKRGIVGIRRGQTKWFKCSIYGMTEEQVQYVVDSFRDIVEENR</sequence>
<evidence type="ECO:0000255" key="1">
    <source>
        <dbReference type="HAMAP-Rule" id="MF_01675"/>
    </source>
</evidence>
<proteinExistence type="inferred from homology"/>
<accession>O27139</accession>
<keyword id="KW-0648">Protein biosynthesis</keyword>
<keyword id="KW-0663">Pyridoxal phosphate</keyword>
<keyword id="KW-1185">Reference proteome</keyword>
<keyword id="KW-0808">Transferase</keyword>
<name>SPSS_METTH</name>
<organism>
    <name type="scientific">Methanothermobacter thermautotrophicus (strain ATCC 29096 / DSM 1053 / JCM 10044 / NBRC 100330 / Delta H)</name>
    <name type="common">Methanobacterium thermoautotrophicum</name>
    <dbReference type="NCBI Taxonomy" id="187420"/>
    <lineage>
        <taxon>Archaea</taxon>
        <taxon>Methanobacteriati</taxon>
        <taxon>Methanobacteriota</taxon>
        <taxon>Methanomada group</taxon>
        <taxon>Methanobacteria</taxon>
        <taxon>Methanobacteriales</taxon>
        <taxon>Methanobacteriaceae</taxon>
        <taxon>Methanothermobacter</taxon>
    </lineage>
</organism>
<feature type="chain" id="PRO_0000107476" description="O-phospho-L-seryl-tRNA:Cys-tRNA synthase">
    <location>
        <begin position="1"/>
        <end position="377"/>
    </location>
</feature>
<feature type="binding site" evidence="1">
    <location>
        <begin position="83"/>
        <end position="84"/>
    </location>
    <ligand>
        <name>pyridoxal 5'-phosphate</name>
        <dbReference type="ChEBI" id="CHEBI:597326"/>
    </ligand>
</feature>
<feature type="binding site" evidence="1">
    <location>
        <position position="188"/>
    </location>
    <ligand>
        <name>pyridoxal 5'-phosphate</name>
        <dbReference type="ChEBI" id="CHEBI:597326"/>
    </ligand>
</feature>
<feature type="binding site" evidence="1">
    <location>
        <begin position="211"/>
        <end position="213"/>
    </location>
    <ligand>
        <name>pyridoxal 5'-phosphate</name>
        <dbReference type="ChEBI" id="CHEBI:597326"/>
    </ligand>
</feature>
<feature type="modified residue" description="N6-(pyridoxal phosphate)lysine" evidence="1">
    <location>
        <position position="214"/>
    </location>
</feature>
<comment type="function">
    <text evidence="1">Converts O-phospho-L-seryl-tRNA(Cys) (Sep-tRNA(Cys)) to L-cysteinyl-tRNA(Cys) (Cys-tRNA(Cys)).</text>
</comment>
<comment type="catalytic activity">
    <reaction evidence="1">
        <text>O-phospho-L-seryl-tRNA(Cys) + hydrogen sulfide + H(+) = L-cysteinyl-tRNA(Cys) + phosphate</text>
        <dbReference type="Rhea" id="RHEA:25686"/>
        <dbReference type="Rhea" id="RHEA-COMP:9679"/>
        <dbReference type="Rhea" id="RHEA-COMP:9719"/>
        <dbReference type="ChEBI" id="CHEBI:15378"/>
        <dbReference type="ChEBI" id="CHEBI:29919"/>
        <dbReference type="ChEBI" id="CHEBI:43474"/>
        <dbReference type="ChEBI" id="CHEBI:78517"/>
        <dbReference type="ChEBI" id="CHEBI:78551"/>
        <dbReference type="EC" id="2.5.1.73"/>
    </reaction>
</comment>
<comment type="cofactor">
    <cofactor evidence="1">
        <name>pyridoxal 5'-phosphate</name>
        <dbReference type="ChEBI" id="CHEBI:597326"/>
    </cofactor>
</comment>
<comment type="subunit">
    <text evidence="1">Homodimer. Interacts with SepRS.</text>
</comment>
<comment type="similarity">
    <text evidence="1">Belongs to the SepCysS family.</text>
</comment>
<gene>
    <name type="ordered locus">MTH_1067</name>
</gene>